<comment type="similarity">
    <text evidence="1">Belongs to the CbrA family.</text>
</comment>
<comment type="sequence caution" evidence="1">
    <conflict type="erroneous initiation">
        <sequence resource="EMBL-CDS" id="AAG58892"/>
    </conflict>
    <text>Extended N-terminus.</text>
</comment>
<name>CBRA_ECO57</name>
<accession>Q8XBZ8</accession>
<gene>
    <name type="primary">cbrA</name>
    <name type="ordered locus">Z5186</name>
    <name type="ordered locus">ECs4630</name>
</gene>
<reference key="1">
    <citation type="journal article" date="2001" name="Nature">
        <title>Genome sequence of enterohaemorrhagic Escherichia coli O157:H7.</title>
        <authorList>
            <person name="Perna N.T."/>
            <person name="Plunkett G. III"/>
            <person name="Burland V."/>
            <person name="Mau B."/>
            <person name="Glasner J.D."/>
            <person name="Rose D.J."/>
            <person name="Mayhew G.F."/>
            <person name="Evans P.S."/>
            <person name="Gregor J."/>
            <person name="Kirkpatrick H.A."/>
            <person name="Posfai G."/>
            <person name="Hackett J."/>
            <person name="Klink S."/>
            <person name="Boutin A."/>
            <person name="Shao Y."/>
            <person name="Miller L."/>
            <person name="Grotbeck E.J."/>
            <person name="Davis N.W."/>
            <person name="Lim A."/>
            <person name="Dimalanta E.T."/>
            <person name="Potamousis K."/>
            <person name="Apodaca J."/>
            <person name="Anantharaman T.S."/>
            <person name="Lin J."/>
            <person name="Yen G."/>
            <person name="Schwartz D.C."/>
            <person name="Welch R.A."/>
            <person name="Blattner F.R."/>
        </authorList>
    </citation>
    <scope>NUCLEOTIDE SEQUENCE [LARGE SCALE GENOMIC DNA]</scope>
    <source>
        <strain>O157:H7 / EDL933 / ATCC 700927 / EHEC</strain>
    </source>
</reference>
<reference key="2">
    <citation type="journal article" date="2001" name="DNA Res.">
        <title>Complete genome sequence of enterohemorrhagic Escherichia coli O157:H7 and genomic comparison with a laboratory strain K-12.</title>
        <authorList>
            <person name="Hayashi T."/>
            <person name="Makino K."/>
            <person name="Ohnishi M."/>
            <person name="Kurokawa K."/>
            <person name="Ishii K."/>
            <person name="Yokoyama K."/>
            <person name="Han C.-G."/>
            <person name="Ohtsubo E."/>
            <person name="Nakayama K."/>
            <person name="Murata T."/>
            <person name="Tanaka M."/>
            <person name="Tobe T."/>
            <person name="Iida T."/>
            <person name="Takami H."/>
            <person name="Honda T."/>
            <person name="Sasakawa C."/>
            <person name="Ogasawara N."/>
            <person name="Yasunaga T."/>
            <person name="Kuhara S."/>
            <person name="Shiba T."/>
            <person name="Hattori M."/>
            <person name="Shinagawa H."/>
        </authorList>
    </citation>
    <scope>NUCLEOTIDE SEQUENCE [LARGE SCALE GENOMIC DNA]</scope>
    <source>
        <strain>O157:H7 / Sakai / RIMD 0509952 / EHEC</strain>
    </source>
</reference>
<keyword id="KW-1185">Reference proteome</keyword>
<sequence length="354" mass="40124">MEHFDVAIIGLGPAGSALARKLAGKMQVIALDKKHQHGTEGFSKPCGGLLAPDAQRSFIRDGLTLPVDVIANPQIFSVKTVDVAASLTRNYQRSYININRHAFDLWMKSLIPASVEVYHDSLCRKIWREDDKWHVIFRADGWEQHITARYLVGADGANSMVRRYLYPDHQIRKYVAIQQWFAEKHPVPFYSCIFDNAITDCYSWSISKDGYFIFGGAYPMKDGQTRFTTLKEKMSAFQFQFGKAVKSEKCTVLFPSRWQDFVCGKDNAFLIGEAAGFISASSLEGISYALDSAEILRSVLLKQPEKINAAYWHATRKLRLKLFGKIVKSRCLTAPALRKWIMRSGMAHIPQLKD</sequence>
<feature type="chain" id="PRO_0000013930" description="Protein CbrA">
    <location>
        <begin position="1"/>
        <end position="354"/>
    </location>
</feature>
<protein>
    <recommendedName>
        <fullName>Protein CbrA</fullName>
    </recommendedName>
</protein>
<evidence type="ECO:0000305" key="1"/>
<dbReference type="EMBL" id="AE005174">
    <property type="protein sequence ID" value="AAG58892.1"/>
    <property type="status" value="ALT_INIT"/>
    <property type="molecule type" value="Genomic_DNA"/>
</dbReference>
<dbReference type="EMBL" id="BA000007">
    <property type="protein sequence ID" value="BAB38053.2"/>
    <property type="molecule type" value="Genomic_DNA"/>
</dbReference>
<dbReference type="PIR" id="F91207">
    <property type="entry name" value="F91207"/>
</dbReference>
<dbReference type="PIR" id="H86053">
    <property type="entry name" value="H86053"/>
</dbReference>
<dbReference type="RefSeq" id="NP_312657.2">
    <property type="nucleotide sequence ID" value="NC_002695.1"/>
</dbReference>
<dbReference type="RefSeq" id="WP_001302380.1">
    <property type="nucleotide sequence ID" value="NZ_VOAI01000011.1"/>
</dbReference>
<dbReference type="SMR" id="Q8XBZ8"/>
<dbReference type="STRING" id="155864.Z5186"/>
<dbReference type="GeneID" id="915406"/>
<dbReference type="KEGG" id="ece:Z5186"/>
<dbReference type="KEGG" id="ecs:ECs_4630"/>
<dbReference type="PATRIC" id="fig|386585.9.peg.4838"/>
<dbReference type="eggNOG" id="COG0644">
    <property type="taxonomic scope" value="Bacteria"/>
</dbReference>
<dbReference type="HOGENOM" id="CLU_024648_1_0_6"/>
<dbReference type="OMA" id="YIAIQEW"/>
<dbReference type="Proteomes" id="UP000000558">
    <property type="component" value="Chromosome"/>
</dbReference>
<dbReference type="Proteomes" id="UP000002519">
    <property type="component" value="Chromosome"/>
</dbReference>
<dbReference type="GO" id="GO:0071949">
    <property type="term" value="F:FAD binding"/>
    <property type="evidence" value="ECO:0007669"/>
    <property type="project" value="InterPro"/>
</dbReference>
<dbReference type="FunFam" id="3.50.50.60:FF:000151">
    <property type="entry name" value="Protein CbrA"/>
    <property type="match status" value="1"/>
</dbReference>
<dbReference type="Gene3D" id="3.50.50.60">
    <property type="entry name" value="FAD/NAD(P)-binding domain"/>
    <property type="match status" value="1"/>
</dbReference>
<dbReference type="InterPro" id="IPR002938">
    <property type="entry name" value="FAD-bd"/>
</dbReference>
<dbReference type="InterPro" id="IPR036188">
    <property type="entry name" value="FAD/NAD-bd_sf"/>
</dbReference>
<dbReference type="InterPro" id="IPR050407">
    <property type="entry name" value="Geranylgeranyl_reductase"/>
</dbReference>
<dbReference type="NCBIfam" id="NF008519">
    <property type="entry name" value="PRK11445.1"/>
    <property type="match status" value="1"/>
</dbReference>
<dbReference type="PANTHER" id="PTHR42685:SF22">
    <property type="entry name" value="CONDITIONED MEDIUM FACTOR RECEPTOR 1"/>
    <property type="match status" value="1"/>
</dbReference>
<dbReference type="PANTHER" id="PTHR42685">
    <property type="entry name" value="GERANYLGERANYL DIPHOSPHATE REDUCTASE"/>
    <property type="match status" value="1"/>
</dbReference>
<dbReference type="Pfam" id="PF01494">
    <property type="entry name" value="FAD_binding_3"/>
    <property type="match status" value="1"/>
</dbReference>
<dbReference type="PRINTS" id="PR00420">
    <property type="entry name" value="RNGMNOXGNASE"/>
</dbReference>
<dbReference type="SUPFAM" id="SSF51905">
    <property type="entry name" value="FAD/NAD(P)-binding domain"/>
    <property type="match status" value="1"/>
</dbReference>
<proteinExistence type="inferred from homology"/>
<organism>
    <name type="scientific">Escherichia coli O157:H7</name>
    <dbReference type="NCBI Taxonomy" id="83334"/>
    <lineage>
        <taxon>Bacteria</taxon>
        <taxon>Pseudomonadati</taxon>
        <taxon>Pseudomonadota</taxon>
        <taxon>Gammaproteobacteria</taxon>
        <taxon>Enterobacterales</taxon>
        <taxon>Enterobacteriaceae</taxon>
        <taxon>Escherichia</taxon>
    </lineage>
</organism>